<protein>
    <recommendedName>
        <fullName evidence="1">DNA-directed RNA polymerase subunit beta'</fullName>
        <shortName evidence="1">RNAP subunit beta'</shortName>
        <ecNumber evidence="1">2.7.7.6</ecNumber>
    </recommendedName>
    <alternativeName>
        <fullName evidence="1">RNA polymerase subunit beta'</fullName>
    </alternativeName>
    <alternativeName>
        <fullName evidence="1">Transcriptase subunit beta'</fullName>
    </alternativeName>
</protein>
<reference key="1">
    <citation type="submission" date="2009-01" db="EMBL/GenBank/DDBJ databases">
        <title>Complete sequence of Geobacter sp. FRC-32.</title>
        <authorList>
            <consortium name="US DOE Joint Genome Institute"/>
            <person name="Lucas S."/>
            <person name="Copeland A."/>
            <person name="Lapidus A."/>
            <person name="Glavina del Rio T."/>
            <person name="Dalin E."/>
            <person name="Tice H."/>
            <person name="Bruce D."/>
            <person name="Goodwin L."/>
            <person name="Pitluck S."/>
            <person name="Saunders E."/>
            <person name="Brettin T."/>
            <person name="Detter J.C."/>
            <person name="Han C."/>
            <person name="Larimer F."/>
            <person name="Land M."/>
            <person name="Hauser L."/>
            <person name="Kyrpides N."/>
            <person name="Ovchinnikova G."/>
            <person name="Kostka J."/>
            <person name="Richardson P."/>
        </authorList>
    </citation>
    <scope>NUCLEOTIDE SEQUENCE [LARGE SCALE GENOMIC DNA]</scope>
    <source>
        <strain>DSM 22248 / JCM 15807 / FRC-32</strain>
    </source>
</reference>
<dbReference type="EC" id="2.7.7.6" evidence="1"/>
<dbReference type="EMBL" id="CP001390">
    <property type="protein sequence ID" value="ACM21972.1"/>
    <property type="molecule type" value="Genomic_DNA"/>
</dbReference>
<dbReference type="RefSeq" id="WP_012648699.1">
    <property type="nucleotide sequence ID" value="NC_011979.1"/>
</dbReference>
<dbReference type="SMR" id="B9M6V1"/>
<dbReference type="STRING" id="316067.Geob_3631"/>
<dbReference type="KEGG" id="geo:Geob_3631"/>
<dbReference type="eggNOG" id="COG0086">
    <property type="taxonomic scope" value="Bacteria"/>
</dbReference>
<dbReference type="HOGENOM" id="CLU_000524_3_1_7"/>
<dbReference type="OrthoDB" id="9815296at2"/>
<dbReference type="Proteomes" id="UP000007721">
    <property type="component" value="Chromosome"/>
</dbReference>
<dbReference type="GO" id="GO:0000428">
    <property type="term" value="C:DNA-directed RNA polymerase complex"/>
    <property type="evidence" value="ECO:0007669"/>
    <property type="project" value="UniProtKB-KW"/>
</dbReference>
<dbReference type="GO" id="GO:0003677">
    <property type="term" value="F:DNA binding"/>
    <property type="evidence" value="ECO:0007669"/>
    <property type="project" value="UniProtKB-UniRule"/>
</dbReference>
<dbReference type="GO" id="GO:0003899">
    <property type="term" value="F:DNA-directed RNA polymerase activity"/>
    <property type="evidence" value="ECO:0007669"/>
    <property type="project" value="UniProtKB-UniRule"/>
</dbReference>
<dbReference type="GO" id="GO:0000287">
    <property type="term" value="F:magnesium ion binding"/>
    <property type="evidence" value="ECO:0007669"/>
    <property type="project" value="UniProtKB-UniRule"/>
</dbReference>
<dbReference type="GO" id="GO:0008270">
    <property type="term" value="F:zinc ion binding"/>
    <property type="evidence" value="ECO:0007669"/>
    <property type="project" value="UniProtKB-UniRule"/>
</dbReference>
<dbReference type="GO" id="GO:0006351">
    <property type="term" value="P:DNA-templated transcription"/>
    <property type="evidence" value="ECO:0007669"/>
    <property type="project" value="UniProtKB-UniRule"/>
</dbReference>
<dbReference type="CDD" id="cd02655">
    <property type="entry name" value="RNAP_beta'_C"/>
    <property type="match status" value="1"/>
</dbReference>
<dbReference type="CDD" id="cd01609">
    <property type="entry name" value="RNAP_beta'_N"/>
    <property type="match status" value="1"/>
</dbReference>
<dbReference type="FunFam" id="1.10.132.30:FF:000003">
    <property type="entry name" value="DNA-directed RNA polymerase subunit beta"/>
    <property type="match status" value="1"/>
</dbReference>
<dbReference type="FunFam" id="1.10.150.390:FF:000002">
    <property type="entry name" value="DNA-directed RNA polymerase subunit beta"/>
    <property type="match status" value="1"/>
</dbReference>
<dbReference type="FunFam" id="1.10.40.90:FF:000001">
    <property type="entry name" value="DNA-directed RNA polymerase subunit beta"/>
    <property type="match status" value="1"/>
</dbReference>
<dbReference type="Gene3D" id="1.10.132.30">
    <property type="match status" value="1"/>
</dbReference>
<dbReference type="Gene3D" id="1.10.150.390">
    <property type="match status" value="1"/>
</dbReference>
<dbReference type="Gene3D" id="1.10.1790.20">
    <property type="match status" value="1"/>
</dbReference>
<dbReference type="Gene3D" id="1.10.40.90">
    <property type="match status" value="1"/>
</dbReference>
<dbReference type="Gene3D" id="2.40.40.20">
    <property type="match status" value="1"/>
</dbReference>
<dbReference type="Gene3D" id="2.40.50.100">
    <property type="match status" value="3"/>
</dbReference>
<dbReference type="Gene3D" id="4.10.860.120">
    <property type="entry name" value="RNA polymerase II, clamp domain"/>
    <property type="match status" value="1"/>
</dbReference>
<dbReference type="Gene3D" id="1.10.274.100">
    <property type="entry name" value="RNA polymerase Rpb1, domain 3"/>
    <property type="match status" value="1"/>
</dbReference>
<dbReference type="HAMAP" id="MF_01322">
    <property type="entry name" value="RNApol_bact_RpoC"/>
    <property type="match status" value="1"/>
</dbReference>
<dbReference type="InterPro" id="IPR045867">
    <property type="entry name" value="DNA-dir_RpoC_beta_prime"/>
</dbReference>
<dbReference type="InterPro" id="IPR012754">
    <property type="entry name" value="DNA-dir_RpoC_beta_prime_bact"/>
</dbReference>
<dbReference type="InterPro" id="IPR000722">
    <property type="entry name" value="RNA_pol_asu"/>
</dbReference>
<dbReference type="InterPro" id="IPR006592">
    <property type="entry name" value="RNA_pol_N"/>
</dbReference>
<dbReference type="InterPro" id="IPR007080">
    <property type="entry name" value="RNA_pol_Rpb1_1"/>
</dbReference>
<dbReference type="InterPro" id="IPR007066">
    <property type="entry name" value="RNA_pol_Rpb1_3"/>
</dbReference>
<dbReference type="InterPro" id="IPR042102">
    <property type="entry name" value="RNA_pol_Rpb1_3_sf"/>
</dbReference>
<dbReference type="InterPro" id="IPR007083">
    <property type="entry name" value="RNA_pol_Rpb1_4"/>
</dbReference>
<dbReference type="InterPro" id="IPR007081">
    <property type="entry name" value="RNA_pol_Rpb1_5"/>
</dbReference>
<dbReference type="InterPro" id="IPR044893">
    <property type="entry name" value="RNA_pol_Rpb1_clamp_domain"/>
</dbReference>
<dbReference type="InterPro" id="IPR038120">
    <property type="entry name" value="Rpb1_funnel_sf"/>
</dbReference>
<dbReference type="NCBIfam" id="TIGR02386">
    <property type="entry name" value="rpoC_TIGR"/>
    <property type="match status" value="1"/>
</dbReference>
<dbReference type="PANTHER" id="PTHR19376">
    <property type="entry name" value="DNA-DIRECTED RNA POLYMERASE"/>
    <property type="match status" value="1"/>
</dbReference>
<dbReference type="PANTHER" id="PTHR19376:SF54">
    <property type="entry name" value="DNA-DIRECTED RNA POLYMERASE SUBUNIT BETA"/>
    <property type="match status" value="1"/>
</dbReference>
<dbReference type="Pfam" id="PF04997">
    <property type="entry name" value="RNA_pol_Rpb1_1"/>
    <property type="match status" value="1"/>
</dbReference>
<dbReference type="Pfam" id="PF00623">
    <property type="entry name" value="RNA_pol_Rpb1_2"/>
    <property type="match status" value="2"/>
</dbReference>
<dbReference type="Pfam" id="PF04983">
    <property type="entry name" value="RNA_pol_Rpb1_3"/>
    <property type="match status" value="1"/>
</dbReference>
<dbReference type="Pfam" id="PF05000">
    <property type="entry name" value="RNA_pol_Rpb1_4"/>
    <property type="match status" value="1"/>
</dbReference>
<dbReference type="Pfam" id="PF04998">
    <property type="entry name" value="RNA_pol_Rpb1_5"/>
    <property type="match status" value="1"/>
</dbReference>
<dbReference type="SMART" id="SM00663">
    <property type="entry name" value="RPOLA_N"/>
    <property type="match status" value="1"/>
</dbReference>
<dbReference type="SUPFAM" id="SSF64484">
    <property type="entry name" value="beta and beta-prime subunits of DNA dependent RNA-polymerase"/>
    <property type="match status" value="1"/>
</dbReference>
<feature type="chain" id="PRO_1000165842" description="DNA-directed RNA polymerase subunit beta'">
    <location>
        <begin position="1"/>
        <end position="1377"/>
    </location>
</feature>
<feature type="binding site" evidence="1">
    <location>
        <position position="70"/>
    </location>
    <ligand>
        <name>Zn(2+)</name>
        <dbReference type="ChEBI" id="CHEBI:29105"/>
        <label>1</label>
    </ligand>
</feature>
<feature type="binding site" evidence="1">
    <location>
        <position position="72"/>
    </location>
    <ligand>
        <name>Zn(2+)</name>
        <dbReference type="ChEBI" id="CHEBI:29105"/>
        <label>1</label>
    </ligand>
</feature>
<feature type="binding site" evidence="1">
    <location>
        <position position="85"/>
    </location>
    <ligand>
        <name>Zn(2+)</name>
        <dbReference type="ChEBI" id="CHEBI:29105"/>
        <label>1</label>
    </ligand>
</feature>
<feature type="binding site" evidence="1">
    <location>
        <position position="88"/>
    </location>
    <ligand>
        <name>Zn(2+)</name>
        <dbReference type="ChEBI" id="CHEBI:29105"/>
        <label>1</label>
    </ligand>
</feature>
<feature type="binding site" evidence="1">
    <location>
        <position position="460"/>
    </location>
    <ligand>
        <name>Mg(2+)</name>
        <dbReference type="ChEBI" id="CHEBI:18420"/>
    </ligand>
</feature>
<feature type="binding site" evidence="1">
    <location>
        <position position="462"/>
    </location>
    <ligand>
        <name>Mg(2+)</name>
        <dbReference type="ChEBI" id="CHEBI:18420"/>
    </ligand>
</feature>
<feature type="binding site" evidence="1">
    <location>
        <position position="464"/>
    </location>
    <ligand>
        <name>Mg(2+)</name>
        <dbReference type="ChEBI" id="CHEBI:18420"/>
    </ligand>
</feature>
<feature type="binding site" evidence="1">
    <location>
        <position position="808"/>
    </location>
    <ligand>
        <name>Zn(2+)</name>
        <dbReference type="ChEBI" id="CHEBI:29105"/>
        <label>2</label>
    </ligand>
</feature>
<feature type="binding site" evidence="1">
    <location>
        <position position="882"/>
    </location>
    <ligand>
        <name>Zn(2+)</name>
        <dbReference type="ChEBI" id="CHEBI:29105"/>
        <label>2</label>
    </ligand>
</feature>
<feature type="binding site" evidence="1">
    <location>
        <position position="889"/>
    </location>
    <ligand>
        <name>Zn(2+)</name>
        <dbReference type="ChEBI" id="CHEBI:29105"/>
        <label>2</label>
    </ligand>
</feature>
<feature type="binding site" evidence="1">
    <location>
        <position position="892"/>
    </location>
    <ligand>
        <name>Zn(2+)</name>
        <dbReference type="ChEBI" id="CHEBI:29105"/>
        <label>2</label>
    </ligand>
</feature>
<sequence>MEDIFNFFDKPKDPLHFSAIRISVSSPEKIRERSFGEVKKPETINYRTFKPERDGLFCAKIFGPTKDYECNCGKYKRMKHRGIVCEKCGVEVIPSKVRRERLGHIDLATPVAHIWFLKSLPSRIGNLMDITLKDLEKVLYFEAYVVTDPKNTGMPFAQVFSEDQYLKAMEEYNGQFEAGMGAAAIRECLMSMDLDVLAEQLRVEMLEATSEAKRKKTAKRLKVVEAFKSSGNKPEWMILECIPVLPPELRPLVPLDGGRFATSDLNDLYRRVINRNNRLKRLMELQAPEVIIRNEKRMLQEAVDALFDNGRRGRAIAGPNKRPLKSLSDMLKGKSGRFRQNLLGKRVDYSGRSVIVVGPELRLHQCGLPKKMALELFKPFIYNKLEEKGFVTTIKSAKKMVEKERPEVWDVLEEVIKEHPVMLNRAPTLHRLGIQAFEPVLIEGKAIQLHPLVCTAFNADFDGDQMAVHLPLSVESQVETRVLMMSTNNILSPAHGKPIIVPSQDMVLGIYYMTREKFFAKGDGKIFASQDEVRIALDADEVDLQARVKVRLKNLATDEKPQLVDTTPGRVVLREILPDEVPFATINKVMTKKELSNLVDVCYRLAGNKETVILADKLKSIGFRYSTIAGISISINDMVIPEGKTAIINRASEDVKEIQNQYTEGLITDGERYNKVIDIWAKSTEEIAKEMLDNLSRDIVHAPDGKEVKVPSFNAIHMMADSGARGSAQQIRQLAGMRGLMAKPSGEIIETPITANFREGLTVLQYFISTHGARKGLADTALKTANSGYLTRRLVDVAQDAIITEPDCGTLDGLVVSSLTEGGEIIEHIGDRILGRVALDDILDPVTGDVLVASNEEIDETLVQKIESAGLEKVKIRSVLTCQSRRGICAKCYGRDLARGHLVNMGEAVGVIAAQSIGEPGTQLTMRTFHIGGTASRRAEQTSLEARTEGSVKFININYVTNTDGHHIVMNRNGELAIVDETGREREKYSILYGAKIKVNVGQVIKQGEAIAEWDPYTMPILTEIAGKVKFGDIIEGVSMEEQVDEVTGLSRKVVVESRDADKRPRITIKDEAGKTAKINETTMGRYYLPVGANITVQEDAVVNAGDVIAKIPRETTKTKDITGGLPRVAELFEARKPKDFAVITEIDGIVTFGKDAKGKRKVIVTPEMGEPKEYLIPKGKHISVHEGDHVRAGEALMDGSSNPHDILRVLGQKELAKYLVDEVQEVYRLQGVKINDKHIETIVRQMLRRVRIKDVGDTTLLIDDQLERYIFEDENERVLDKGGKPAIAEPLLLGITKASLSTESFISAASFQETTKVLTQASIEGKIDGLRGLKENVIMGRLIPAGTGLARYRNLKLVAEEPVVTPSEQVEEVAAG</sequence>
<organism>
    <name type="scientific">Geotalea daltonii (strain DSM 22248 / JCM 15807 / FRC-32)</name>
    <name type="common">Geobacter daltonii</name>
    <dbReference type="NCBI Taxonomy" id="316067"/>
    <lineage>
        <taxon>Bacteria</taxon>
        <taxon>Pseudomonadati</taxon>
        <taxon>Thermodesulfobacteriota</taxon>
        <taxon>Desulfuromonadia</taxon>
        <taxon>Geobacterales</taxon>
        <taxon>Geobacteraceae</taxon>
        <taxon>Geotalea</taxon>
    </lineage>
</organism>
<gene>
    <name evidence="1" type="primary">rpoC</name>
    <name type="ordered locus">Geob_3631</name>
</gene>
<keyword id="KW-0240">DNA-directed RNA polymerase</keyword>
<keyword id="KW-0460">Magnesium</keyword>
<keyword id="KW-0479">Metal-binding</keyword>
<keyword id="KW-0548">Nucleotidyltransferase</keyword>
<keyword id="KW-1185">Reference proteome</keyword>
<keyword id="KW-0804">Transcription</keyword>
<keyword id="KW-0808">Transferase</keyword>
<keyword id="KW-0862">Zinc</keyword>
<evidence type="ECO:0000255" key="1">
    <source>
        <dbReference type="HAMAP-Rule" id="MF_01322"/>
    </source>
</evidence>
<proteinExistence type="inferred from homology"/>
<comment type="function">
    <text evidence="1">DNA-dependent RNA polymerase catalyzes the transcription of DNA into RNA using the four ribonucleoside triphosphates as substrates.</text>
</comment>
<comment type="catalytic activity">
    <reaction evidence="1">
        <text>RNA(n) + a ribonucleoside 5'-triphosphate = RNA(n+1) + diphosphate</text>
        <dbReference type="Rhea" id="RHEA:21248"/>
        <dbReference type="Rhea" id="RHEA-COMP:14527"/>
        <dbReference type="Rhea" id="RHEA-COMP:17342"/>
        <dbReference type="ChEBI" id="CHEBI:33019"/>
        <dbReference type="ChEBI" id="CHEBI:61557"/>
        <dbReference type="ChEBI" id="CHEBI:140395"/>
        <dbReference type="EC" id="2.7.7.6"/>
    </reaction>
</comment>
<comment type="cofactor">
    <cofactor evidence="1">
        <name>Mg(2+)</name>
        <dbReference type="ChEBI" id="CHEBI:18420"/>
    </cofactor>
    <text evidence="1">Binds 1 Mg(2+) ion per subunit.</text>
</comment>
<comment type="cofactor">
    <cofactor evidence="1">
        <name>Zn(2+)</name>
        <dbReference type="ChEBI" id="CHEBI:29105"/>
    </cofactor>
    <text evidence="1">Binds 2 Zn(2+) ions per subunit.</text>
</comment>
<comment type="subunit">
    <text evidence="1">The RNAP catalytic core consists of 2 alpha, 1 beta, 1 beta' and 1 omega subunit. When a sigma factor is associated with the core the holoenzyme is formed, which can initiate transcription.</text>
</comment>
<comment type="similarity">
    <text evidence="1">Belongs to the RNA polymerase beta' chain family.</text>
</comment>
<name>RPOC_GEODF</name>
<accession>B9M6V1</accession>